<feature type="signal peptide" evidence="2">
    <location>
        <begin position="1"/>
        <end position="19"/>
    </location>
</feature>
<feature type="propeptide" id="PRO_0000407096" evidence="1">
    <location>
        <begin position="20"/>
        <end position="175"/>
    </location>
</feature>
<feature type="chain" id="PRO_0000407097" description="Neutral protease 2 homolog ATEG_04941">
    <location>
        <begin position="176"/>
        <end position="352"/>
    </location>
</feature>
<feature type="active site" evidence="3">
    <location>
        <position position="304"/>
    </location>
</feature>
<feature type="binding site" evidence="3">
    <location>
        <position position="303"/>
    </location>
    <ligand>
        <name>Zn(2+)</name>
        <dbReference type="ChEBI" id="CHEBI:29105"/>
        <note>catalytic</note>
    </ligand>
</feature>
<feature type="binding site" evidence="3">
    <location>
        <position position="307"/>
    </location>
    <ligand>
        <name>Zn(2+)</name>
        <dbReference type="ChEBI" id="CHEBI:29105"/>
        <note>catalytic</note>
    </ligand>
</feature>
<feature type="binding site" evidence="3">
    <location>
        <position position="318"/>
    </location>
    <ligand>
        <name>Zn(2+)</name>
        <dbReference type="ChEBI" id="CHEBI:29105"/>
        <note>catalytic</note>
    </ligand>
</feature>
<feature type="disulfide bond" evidence="1">
    <location>
        <begin position="181"/>
        <end position="253"/>
    </location>
</feature>
<feature type="disulfide bond" evidence="1">
    <location>
        <begin position="260"/>
        <end position="278"/>
    </location>
</feature>
<protein>
    <recommendedName>
        <fullName>Neutral protease 2 homolog ATEG_04941</fullName>
        <ecNumber>3.4.24.39</ecNumber>
    </recommendedName>
    <alternativeName>
        <fullName>Deuterolysin ATEG_04941</fullName>
    </alternativeName>
</protein>
<dbReference type="EC" id="3.4.24.39"/>
<dbReference type="EMBL" id="CH476600">
    <property type="protein sequence ID" value="EAU34010.1"/>
    <property type="molecule type" value="Genomic_DNA"/>
</dbReference>
<dbReference type="RefSeq" id="XP_001214119.1">
    <property type="nucleotide sequence ID" value="XM_001214119.1"/>
</dbReference>
<dbReference type="SMR" id="Q0CMZ3"/>
<dbReference type="STRING" id="341663.Q0CMZ3"/>
<dbReference type="MEROPS" id="M35.002"/>
<dbReference type="EnsemblFungi" id="EAU34010">
    <property type="protein sequence ID" value="EAU34010"/>
    <property type="gene ID" value="ATEG_04941"/>
</dbReference>
<dbReference type="GeneID" id="4321206"/>
<dbReference type="VEuPathDB" id="FungiDB:ATEG_04941"/>
<dbReference type="eggNOG" id="ENOG502SGF5">
    <property type="taxonomic scope" value="Eukaryota"/>
</dbReference>
<dbReference type="HOGENOM" id="CLU_039313_1_1_1"/>
<dbReference type="OMA" id="ANCDLYY"/>
<dbReference type="OrthoDB" id="412874at2759"/>
<dbReference type="Proteomes" id="UP000007963">
    <property type="component" value="Unassembled WGS sequence"/>
</dbReference>
<dbReference type="GO" id="GO:0005576">
    <property type="term" value="C:extracellular region"/>
    <property type="evidence" value="ECO:0007669"/>
    <property type="project" value="UniProtKB-SubCell"/>
</dbReference>
<dbReference type="GO" id="GO:0046872">
    <property type="term" value="F:metal ion binding"/>
    <property type="evidence" value="ECO:0007669"/>
    <property type="project" value="UniProtKB-KW"/>
</dbReference>
<dbReference type="GO" id="GO:0004222">
    <property type="term" value="F:metalloendopeptidase activity"/>
    <property type="evidence" value="ECO:0007669"/>
    <property type="project" value="InterPro"/>
</dbReference>
<dbReference type="GO" id="GO:0006508">
    <property type="term" value="P:proteolysis"/>
    <property type="evidence" value="ECO:0007669"/>
    <property type="project" value="UniProtKB-KW"/>
</dbReference>
<dbReference type="CDD" id="cd11008">
    <property type="entry name" value="M35_deuterolysin_like"/>
    <property type="match status" value="1"/>
</dbReference>
<dbReference type="Gene3D" id="2.60.40.2970">
    <property type="match status" value="1"/>
</dbReference>
<dbReference type="Gene3D" id="3.40.390.10">
    <property type="entry name" value="Collagenase (Catalytic Domain)"/>
    <property type="match status" value="1"/>
</dbReference>
<dbReference type="InterPro" id="IPR050414">
    <property type="entry name" value="Fungal_M35_metalloproteases"/>
</dbReference>
<dbReference type="InterPro" id="IPR029463">
    <property type="entry name" value="Lys_MEP"/>
</dbReference>
<dbReference type="InterPro" id="IPR024079">
    <property type="entry name" value="MetalloPept_cat_dom_sf"/>
</dbReference>
<dbReference type="InterPro" id="IPR001384">
    <property type="entry name" value="Peptidase_M35"/>
</dbReference>
<dbReference type="PANTHER" id="PTHR37016">
    <property type="match status" value="1"/>
</dbReference>
<dbReference type="PANTHER" id="PTHR37016:SF3">
    <property type="entry name" value="NEUTRAL PROTEASE 2-RELATED"/>
    <property type="match status" value="1"/>
</dbReference>
<dbReference type="Pfam" id="PF02102">
    <property type="entry name" value="Peptidase_M35"/>
    <property type="match status" value="1"/>
</dbReference>
<dbReference type="PRINTS" id="PR00768">
    <property type="entry name" value="DEUTEROLYSIN"/>
</dbReference>
<dbReference type="SMART" id="SM01351">
    <property type="entry name" value="Aspzincin_M35"/>
    <property type="match status" value="1"/>
</dbReference>
<dbReference type="SUPFAM" id="SSF55486">
    <property type="entry name" value="Metalloproteases ('zincins'), catalytic domain"/>
    <property type="match status" value="1"/>
</dbReference>
<dbReference type="PROSITE" id="PS00142">
    <property type="entry name" value="ZINC_PROTEASE"/>
    <property type="match status" value="1"/>
</dbReference>
<organism>
    <name type="scientific">Aspergillus terreus (strain NIH 2624 / FGSC A1156)</name>
    <dbReference type="NCBI Taxonomy" id="341663"/>
    <lineage>
        <taxon>Eukaryota</taxon>
        <taxon>Fungi</taxon>
        <taxon>Dikarya</taxon>
        <taxon>Ascomycota</taxon>
        <taxon>Pezizomycotina</taxon>
        <taxon>Eurotiomycetes</taxon>
        <taxon>Eurotiomycetidae</taxon>
        <taxon>Eurotiales</taxon>
        <taxon>Aspergillaceae</taxon>
        <taxon>Aspergillus</taxon>
        <taxon>Aspergillus subgen. Circumdati</taxon>
    </lineage>
</organism>
<reference key="1">
    <citation type="submission" date="2005-09" db="EMBL/GenBank/DDBJ databases">
        <title>Annotation of the Aspergillus terreus NIH2624 genome.</title>
        <authorList>
            <person name="Birren B.W."/>
            <person name="Lander E.S."/>
            <person name="Galagan J.E."/>
            <person name="Nusbaum C."/>
            <person name="Devon K."/>
            <person name="Henn M."/>
            <person name="Ma L.-J."/>
            <person name="Jaffe D.B."/>
            <person name="Butler J."/>
            <person name="Alvarez P."/>
            <person name="Gnerre S."/>
            <person name="Grabherr M."/>
            <person name="Kleber M."/>
            <person name="Mauceli E.W."/>
            <person name="Brockman W."/>
            <person name="Rounsley S."/>
            <person name="Young S.K."/>
            <person name="LaButti K."/>
            <person name="Pushparaj V."/>
            <person name="DeCaprio D."/>
            <person name="Crawford M."/>
            <person name="Koehrsen M."/>
            <person name="Engels R."/>
            <person name="Montgomery P."/>
            <person name="Pearson M."/>
            <person name="Howarth C."/>
            <person name="Larson L."/>
            <person name="Luoma S."/>
            <person name="White J."/>
            <person name="Alvarado L."/>
            <person name="Kodira C.D."/>
            <person name="Zeng Q."/>
            <person name="Oleary S."/>
            <person name="Yandava C."/>
            <person name="Denning D.W."/>
            <person name="Nierman W.C."/>
            <person name="Milne T."/>
            <person name="Madden K."/>
        </authorList>
    </citation>
    <scope>NUCLEOTIDE SEQUENCE [LARGE SCALE GENOMIC DNA]</scope>
    <source>
        <strain>NIH 2624 / FGSC A1156</strain>
    </source>
</reference>
<evidence type="ECO:0000250" key="1"/>
<evidence type="ECO:0000255" key="2"/>
<evidence type="ECO:0000255" key="3">
    <source>
        <dbReference type="PROSITE-ProRule" id="PRU10095"/>
    </source>
</evidence>
<evidence type="ECO:0000305" key="4"/>
<accession>Q0CMZ3</accession>
<keyword id="KW-0165">Cleavage on pair of basic residues</keyword>
<keyword id="KW-1015">Disulfide bond</keyword>
<keyword id="KW-0378">Hydrolase</keyword>
<keyword id="KW-0479">Metal-binding</keyword>
<keyword id="KW-0482">Metalloprotease</keyword>
<keyword id="KW-0645">Protease</keyword>
<keyword id="KW-1185">Reference proteome</keyword>
<keyword id="KW-0964">Secreted</keyword>
<keyword id="KW-0732">Signal</keyword>
<keyword id="KW-0862">Zinc</keyword>
<keyword id="KW-0865">Zymogen</keyword>
<name>NPIIA_ASPTN</name>
<sequence>MRFTALATAILPLACNVLALPAKTGEAPKLDVSLSQVDNTLIKAVVKNTGSEDITFVHLNFFRDKAPVKKVSLFRNATELPFQGIKQRFRTEGLTEDALTVLAPGESIEDEFDIAATSDLSEGGSITISTDGFVPIATGNKITGSVPYSSNELSIEVDAAQAASVASAVKPLDKRTKVASCSGTRSSALSTALKNTVSLANAAASAAQSGSSSRFQEYFKTTSSSVRSTVAARFRAVASEASSTSSGSTTYYCTDTYGYCSSNVLAYTLPAYNIIANCDIYYTYLSALTRTCHAQDQATTTLHEFTHAPGVYSPGTDDLGYGYDAATALSSSQALNNADTYALFANAVNLNC</sequence>
<comment type="function">
    <text evidence="1">Secreted metalloproteinase that allows assimilation of proteinaceous substrates. Shows high activities on basic nuclear substrates such as histone and protamine (By similarity).</text>
</comment>
<comment type="catalytic activity">
    <reaction>
        <text>Preferential cleavage of bonds with hydrophobic residues in P1'. Also 3-Asn-|-Gln-4 and 8-Gly-|-Ser-9 bonds in insulin B chain.</text>
        <dbReference type="EC" id="3.4.24.39"/>
    </reaction>
</comment>
<comment type="cofactor">
    <cofactor evidence="1">
        <name>Zn(2+)</name>
        <dbReference type="ChEBI" id="CHEBI:29105"/>
    </cofactor>
    <text evidence="1">Binds 1 zinc ion per subunit.</text>
</comment>
<comment type="subcellular location">
    <subcellularLocation>
        <location evidence="1">Secreted</location>
    </subcellularLocation>
</comment>
<comment type="similarity">
    <text evidence="4">Belongs to the peptidase M35 family.</text>
</comment>
<proteinExistence type="inferred from homology"/>
<gene>
    <name type="ORF">ATEG_04941</name>
</gene>